<keyword id="KW-1185">Reference proteome</keyword>
<feature type="chain" id="PRO_0000427467" description="Uncharacterized protein MT2148">
    <location>
        <begin position="1"/>
        <end position="76"/>
    </location>
</feature>
<accession>P9WLJ6</accession>
<accession>L0T8M2</accession>
<accession>Q10696</accession>
<proteinExistence type="predicted"/>
<protein>
    <recommendedName>
        <fullName>Uncharacterized protein MT2148</fullName>
    </recommendedName>
</protein>
<organism>
    <name type="scientific">Mycobacterium tuberculosis (strain CDC 1551 / Oshkosh)</name>
    <dbReference type="NCBI Taxonomy" id="83331"/>
    <lineage>
        <taxon>Bacteria</taxon>
        <taxon>Bacillati</taxon>
        <taxon>Actinomycetota</taxon>
        <taxon>Actinomycetes</taxon>
        <taxon>Mycobacteriales</taxon>
        <taxon>Mycobacteriaceae</taxon>
        <taxon>Mycobacterium</taxon>
        <taxon>Mycobacterium tuberculosis complex</taxon>
    </lineage>
</organism>
<dbReference type="EMBL" id="AE000516">
    <property type="status" value="NOT_ANNOTATED_CDS"/>
    <property type="molecule type" value="Genomic_DNA"/>
</dbReference>
<dbReference type="PIR" id="B70767">
    <property type="entry name" value="B70767"/>
</dbReference>
<dbReference type="Proteomes" id="UP000001020">
    <property type="component" value="Chromosome"/>
</dbReference>
<gene>
    <name type="ordered locus">MT2148</name>
</gene>
<name>Y2087_MYCTO</name>
<sequence length="76" mass="8088">MLAGLRPSIGIVGDALDNALCETTTGPHRTECSHGSPFRSGPIRTLADLEDIASAWVEHTCHTQQGVRIPGRLQPA</sequence>
<reference key="1">
    <citation type="journal article" date="2002" name="J. Bacteriol.">
        <title>Whole-genome comparison of Mycobacterium tuberculosis clinical and laboratory strains.</title>
        <authorList>
            <person name="Fleischmann R.D."/>
            <person name="Alland D."/>
            <person name="Eisen J.A."/>
            <person name="Carpenter L."/>
            <person name="White O."/>
            <person name="Peterson J.D."/>
            <person name="DeBoy R.T."/>
            <person name="Dodson R.J."/>
            <person name="Gwinn M.L."/>
            <person name="Haft D.H."/>
            <person name="Hickey E.K."/>
            <person name="Kolonay J.F."/>
            <person name="Nelson W.C."/>
            <person name="Umayam L.A."/>
            <person name="Ermolaeva M.D."/>
            <person name="Salzberg S.L."/>
            <person name="Delcher A."/>
            <person name="Utterback T.R."/>
            <person name="Weidman J.F."/>
            <person name="Khouri H.M."/>
            <person name="Gill J."/>
            <person name="Mikula A."/>
            <person name="Bishai W."/>
            <person name="Jacobs W.R. Jr."/>
            <person name="Venter J.C."/>
            <person name="Fraser C.M."/>
        </authorList>
    </citation>
    <scope>NUCLEOTIDE SEQUENCE [LARGE SCALE GENOMIC DNA]</scope>
    <source>
        <strain>CDC 1551 / Oshkosh</strain>
    </source>
</reference>